<protein>
    <recommendedName>
        <fullName>RING finger protein Z</fullName>
        <shortName>Protein Z</shortName>
    </recommendedName>
    <alternativeName>
        <fullName>Zinc-binding protein</fullName>
    </alternativeName>
</protein>
<reference key="1">
    <citation type="journal article" date="1989" name="Virology">
        <title>The completed sequence of lymphocytic choriomeningitis virus reveals a unique RNA structure and a gene for a zinc finger protein.</title>
        <authorList>
            <person name="Salvato M.S."/>
            <person name="Shimomaye E.M."/>
        </authorList>
    </citation>
    <scope>NUCLEOTIDE SEQUENCE [GENOMIC RNA]</scope>
</reference>
<dbReference type="SMR" id="P19326"/>
<dbReference type="GO" id="GO:0044220">
    <property type="term" value="C:host cell perinuclear region of cytoplasm"/>
    <property type="evidence" value="ECO:0007669"/>
    <property type="project" value="UniProtKB-SubCell"/>
</dbReference>
<dbReference type="GO" id="GO:0020002">
    <property type="term" value="C:host cell plasma membrane"/>
    <property type="evidence" value="ECO:0007669"/>
    <property type="project" value="UniProtKB-SubCell"/>
</dbReference>
<dbReference type="GO" id="GO:0016020">
    <property type="term" value="C:membrane"/>
    <property type="evidence" value="ECO:0007669"/>
    <property type="project" value="UniProtKB-KW"/>
</dbReference>
<dbReference type="GO" id="GO:0044423">
    <property type="term" value="C:virion component"/>
    <property type="evidence" value="ECO:0007669"/>
    <property type="project" value="UniProtKB-KW"/>
</dbReference>
<dbReference type="GO" id="GO:0003723">
    <property type="term" value="F:RNA binding"/>
    <property type="evidence" value="ECO:0007669"/>
    <property type="project" value="InterPro"/>
</dbReference>
<dbReference type="GO" id="GO:0008270">
    <property type="term" value="F:zinc ion binding"/>
    <property type="evidence" value="ECO:0007669"/>
    <property type="project" value="UniProtKB-KW"/>
</dbReference>
<dbReference type="Gene3D" id="3.30.160.310">
    <property type="match status" value="1"/>
</dbReference>
<dbReference type="InterPro" id="IPR038485">
    <property type="entry name" value="Z_RING-type_Znf_sf"/>
</dbReference>
<dbReference type="InterPro" id="IPR003224">
    <property type="entry name" value="Z_RING_Znf"/>
</dbReference>
<dbReference type="Pfam" id="PF03854">
    <property type="entry name" value="zf-P11"/>
    <property type="match status" value="1"/>
</dbReference>
<dbReference type="SUPFAM" id="SSF57850">
    <property type="entry name" value="RING/U-box"/>
    <property type="match status" value="1"/>
</dbReference>
<name>Z_LYCVP</name>
<gene>
    <name type="primary">Z</name>
</gene>
<organismHost>
    <name type="scientific">Homo sapiens</name>
    <name type="common">Human</name>
    <dbReference type="NCBI Taxonomy" id="9606"/>
</organismHost>
<organismHost>
    <name type="scientific">Mesocricetus auratus</name>
    <name type="common">Golden hamster</name>
    <dbReference type="NCBI Taxonomy" id="10036"/>
</organismHost>
<organismHost>
    <name type="scientific">Mus musculus</name>
    <name type="common">Mouse</name>
    <dbReference type="NCBI Taxonomy" id="10090"/>
</organismHost>
<feature type="chain" id="PRO_0000079203" description="RING finger protein Z">
    <location>
        <begin position="1" status="less than"/>
        <end position="51" status="greater than"/>
    </location>
</feature>
<feature type="zinc finger region" description="RING-type; atypical">
    <location>
        <begin position="11"/>
        <end position="47"/>
    </location>
</feature>
<feature type="non-terminal residue">
    <location>
        <position position="1"/>
    </location>
</feature>
<feature type="non-terminal residue">
    <location>
        <position position="51"/>
    </location>
</feature>
<proteinExistence type="inferred from homology"/>
<evidence type="ECO:0000250" key="1"/>
<evidence type="ECO:0000250" key="2">
    <source>
        <dbReference type="UniProtKB" id="P18541"/>
    </source>
</evidence>
<evidence type="ECO:0000255" key="3">
    <source>
        <dbReference type="HAMAP-Rule" id="MF_04087"/>
    </source>
</evidence>
<evidence type="ECO:0000305" key="4"/>
<accession>P19326</accession>
<comment type="function">
    <text evidence="2">Plays a crucial role in virion assembly and budding. Expressed late in the virus life cycle, it acts as an inhibitor of viral transcription and RNA synthesis by interacting with the viral polymerase L. Presumably recruits the NP encapsidated genome to cellular membranes at budding sites via direct interaction with NP. Plays critical roles in the final steps of viral release by interacting with host TSG101, a member of the vacuolar protein-sorting pathway and using other cellular host proteins involved in vesicle formation pathway. The budding of the virus progeny occurs after association of protein Z with the viral glycoprotein complex SSP-GP1-GP2 at the cell periphery, step that requires myristoylation of protein Z. Also selectively represses protein production by associating with host EIF4E (By similarity). In cell-based minigenome assay, has an inhibitory effect on the ribonucleoprotein machinery (vRNP), which is responsible for the replication and transcription of the viral genome (By similarity).</text>
</comment>
<comment type="subunit">
    <text evidence="3">Interacts with protein NP; this interaction probably directs the encapsidated genome to budding sites. Interacts (via RING-type zinc finger) with polymerase L; this interaction inhibits viral transcription and replication, Z partially blocks the product exit tunnel for the releasing nascent RNA product. Interacts with the glycoprotein complex; this interaction plays a role in virion budding. Interacts (via RING-type zinc finger) with host EIF4E; this interaction results in conformational changes of both interacting proteins and reduces EIF4E affinity for its substrate, the 5'-m7 G cap structure. Interacts (via late-budding domain) with host TSG101; this interaction is essential for budding and release of viral particles. Interacts with host RPLP0; this interaction may serve to load ribosome-like particles inside the virion. Interacts with host PML; this interaction induces PML bodies redistribution in the cytoplasm upon viral infection.</text>
</comment>
<comment type="subcellular location">
    <subcellularLocation>
        <location>Virion</location>
    </subcellularLocation>
    <subcellularLocation>
        <location>Host cytoplasm</location>
        <location>Host perinuclear region</location>
    </subcellularLocation>
    <subcellularLocation>
        <location>Host cell membrane</location>
        <topology>Lipid-anchor</topology>
        <orientation>Cytoplasmic side</orientation>
    </subcellularLocation>
    <text evidence="1">Mainly perinuclear. During budding, associates at the inner side of the plasma membrane of infected cells (By similarity).</text>
</comment>
<comment type="domain">
    <text evidence="1">The RING finger domain is essential for the inhibitory activity of protein Z in transcription and RNA replication.</text>
</comment>
<comment type="similarity">
    <text evidence="4">Belongs to the arenaviridae Z protein family.</text>
</comment>
<sequence>PDTTYLGPLNCKSCWQKFDSLVRCHDHYLCRHCLNLLLTSSDRCPLCKYPL</sequence>
<keyword id="KW-1032">Host cell membrane</keyword>
<keyword id="KW-1035">Host cytoplasm</keyword>
<keyword id="KW-1043">Host membrane</keyword>
<keyword id="KW-0945">Host-virus interaction</keyword>
<keyword id="KW-0449">Lipoprotein</keyword>
<keyword id="KW-0472">Membrane</keyword>
<keyword id="KW-0479">Metal-binding</keyword>
<keyword id="KW-0946">Virion</keyword>
<keyword id="KW-0862">Zinc</keyword>
<keyword id="KW-0863">Zinc-finger</keyword>
<organism>
    <name type="scientific">Lymphocytic choriomeningitis virus (strain Pasteur)</name>
    <name type="common">LCMV</name>
    <dbReference type="NCBI Taxonomy" id="11625"/>
    <lineage>
        <taxon>Viruses</taxon>
        <taxon>Riboviria</taxon>
        <taxon>Orthornavirae</taxon>
        <taxon>Negarnaviricota</taxon>
        <taxon>Polyploviricotina</taxon>
        <taxon>Ellioviricetes</taxon>
        <taxon>Bunyavirales</taxon>
        <taxon>Arenaviridae</taxon>
        <taxon>Mammarenavirus</taxon>
        <taxon>Mammarenavirus choriomeningitidis</taxon>
    </lineage>
</organism>